<gene>
    <name type="primary">cdc6</name>
    <name type="ordered locus">TK1901</name>
</gene>
<comment type="function">
    <text evidence="1">Involved in regulation of DNA replication.</text>
</comment>
<comment type="similarity">
    <text evidence="1">Belongs to the CDC6/cdc18 family.</text>
</comment>
<protein>
    <recommendedName>
        <fullName evidence="1">ORC1-type DNA replication protein</fullName>
    </recommendedName>
</protein>
<keyword id="KW-0067">ATP-binding</keyword>
<keyword id="KW-0235">DNA replication</keyword>
<keyword id="KW-0547">Nucleotide-binding</keyword>
<keyword id="KW-1185">Reference proteome</keyword>
<reference key="1">
    <citation type="journal article" date="2005" name="Genome Res.">
        <title>Complete genome sequence of the hyperthermophilic archaeon Thermococcus kodakaraensis KOD1 and comparison with Pyrococcus genomes.</title>
        <authorList>
            <person name="Fukui T."/>
            <person name="Atomi H."/>
            <person name="Kanai T."/>
            <person name="Matsumi R."/>
            <person name="Fujiwara S."/>
            <person name="Imanaka T."/>
        </authorList>
    </citation>
    <scope>NUCLEOTIDE SEQUENCE [LARGE SCALE GENOMIC DNA]</scope>
    <source>
        <strain>ATCC BAA-918 / JCM 12380 / KOD1</strain>
    </source>
</reference>
<dbReference type="EMBL" id="AP006878">
    <property type="protein sequence ID" value="BAD86090.1"/>
    <property type="molecule type" value="Genomic_DNA"/>
</dbReference>
<dbReference type="RefSeq" id="WP_011250852.1">
    <property type="nucleotide sequence ID" value="NC_006624.1"/>
</dbReference>
<dbReference type="SMR" id="Q5JET2"/>
<dbReference type="STRING" id="69014.TK1901"/>
<dbReference type="EnsemblBacteria" id="BAD86090">
    <property type="protein sequence ID" value="BAD86090"/>
    <property type="gene ID" value="TK1901"/>
</dbReference>
<dbReference type="GeneID" id="78448432"/>
<dbReference type="KEGG" id="tko:TK1901"/>
<dbReference type="PATRIC" id="fig|69014.16.peg.1859"/>
<dbReference type="eggNOG" id="arCOG00467">
    <property type="taxonomic scope" value="Archaea"/>
</dbReference>
<dbReference type="HOGENOM" id="CLU_025112_3_1_2"/>
<dbReference type="InParanoid" id="Q5JET2"/>
<dbReference type="OrthoDB" id="195574at2157"/>
<dbReference type="PhylomeDB" id="Q5JET2"/>
<dbReference type="Proteomes" id="UP000000536">
    <property type="component" value="Chromosome"/>
</dbReference>
<dbReference type="GO" id="GO:0005524">
    <property type="term" value="F:ATP binding"/>
    <property type="evidence" value="ECO:0007669"/>
    <property type="project" value="UniProtKB-UniRule"/>
</dbReference>
<dbReference type="GO" id="GO:0016887">
    <property type="term" value="F:ATP hydrolysis activity"/>
    <property type="evidence" value="ECO:0007669"/>
    <property type="project" value="InterPro"/>
</dbReference>
<dbReference type="GO" id="GO:0006260">
    <property type="term" value="P:DNA replication"/>
    <property type="evidence" value="ECO:0007669"/>
    <property type="project" value="UniProtKB-UniRule"/>
</dbReference>
<dbReference type="CDD" id="cd00009">
    <property type="entry name" value="AAA"/>
    <property type="match status" value="1"/>
</dbReference>
<dbReference type="CDD" id="cd08768">
    <property type="entry name" value="Cdc6_C"/>
    <property type="match status" value="1"/>
</dbReference>
<dbReference type="FunFam" id="1.10.10.10:FF:000502">
    <property type="entry name" value="ORC1-type DNA replication protein"/>
    <property type="match status" value="1"/>
</dbReference>
<dbReference type="FunFam" id="1.10.8.60:FF:000073">
    <property type="entry name" value="ORC1-type DNA replication protein"/>
    <property type="match status" value="1"/>
</dbReference>
<dbReference type="FunFam" id="3.40.50.300:FF:000930">
    <property type="entry name" value="ORC1-type DNA replication protein"/>
    <property type="match status" value="1"/>
</dbReference>
<dbReference type="Gene3D" id="1.10.8.60">
    <property type="match status" value="1"/>
</dbReference>
<dbReference type="Gene3D" id="3.40.50.300">
    <property type="entry name" value="P-loop containing nucleotide triphosphate hydrolases"/>
    <property type="match status" value="1"/>
</dbReference>
<dbReference type="Gene3D" id="1.10.10.10">
    <property type="entry name" value="Winged helix-like DNA-binding domain superfamily/Winged helix DNA-binding domain"/>
    <property type="match status" value="1"/>
</dbReference>
<dbReference type="HAMAP" id="MF_01407">
    <property type="entry name" value="ORC1_type_DNA_replic_protein"/>
    <property type="match status" value="1"/>
</dbReference>
<dbReference type="InterPro" id="IPR003593">
    <property type="entry name" value="AAA+_ATPase"/>
</dbReference>
<dbReference type="InterPro" id="IPR041664">
    <property type="entry name" value="AAA_16"/>
</dbReference>
<dbReference type="InterPro" id="IPR015163">
    <property type="entry name" value="Cdc6_C"/>
</dbReference>
<dbReference type="InterPro" id="IPR055237">
    <property type="entry name" value="Cdc6_lid"/>
</dbReference>
<dbReference type="InterPro" id="IPR050311">
    <property type="entry name" value="ORC1/CDC6"/>
</dbReference>
<dbReference type="InterPro" id="IPR014277">
    <property type="entry name" value="Orc1/Cdc6_arc"/>
</dbReference>
<dbReference type="InterPro" id="IPR027417">
    <property type="entry name" value="P-loop_NTPase"/>
</dbReference>
<dbReference type="InterPro" id="IPR036388">
    <property type="entry name" value="WH-like_DNA-bd_sf"/>
</dbReference>
<dbReference type="InterPro" id="IPR036390">
    <property type="entry name" value="WH_DNA-bd_sf"/>
</dbReference>
<dbReference type="NCBIfam" id="TIGR02928">
    <property type="entry name" value="orc1/cdc6 family replication initiation protein"/>
    <property type="match status" value="1"/>
</dbReference>
<dbReference type="NCBIfam" id="NF001625">
    <property type="entry name" value="PRK00411.1-3"/>
    <property type="match status" value="1"/>
</dbReference>
<dbReference type="PANTHER" id="PTHR10763">
    <property type="entry name" value="CELL DIVISION CONTROL PROTEIN 6-RELATED"/>
    <property type="match status" value="1"/>
</dbReference>
<dbReference type="PANTHER" id="PTHR10763:SF22">
    <property type="entry name" value="ORC1-TYPE DNA REPLICATION PROTEIN"/>
    <property type="match status" value="1"/>
</dbReference>
<dbReference type="Pfam" id="PF13191">
    <property type="entry name" value="AAA_16"/>
    <property type="match status" value="1"/>
</dbReference>
<dbReference type="Pfam" id="PF09079">
    <property type="entry name" value="Cdc6_C"/>
    <property type="match status" value="1"/>
</dbReference>
<dbReference type="Pfam" id="PF22703">
    <property type="entry name" value="Cdc6_lid"/>
    <property type="match status" value="1"/>
</dbReference>
<dbReference type="SMART" id="SM00382">
    <property type="entry name" value="AAA"/>
    <property type="match status" value="1"/>
</dbReference>
<dbReference type="SMART" id="SM01074">
    <property type="entry name" value="Cdc6_C"/>
    <property type="match status" value="1"/>
</dbReference>
<dbReference type="SUPFAM" id="SSF52540">
    <property type="entry name" value="P-loop containing nucleoside triphosphate hydrolases"/>
    <property type="match status" value="1"/>
</dbReference>
<dbReference type="SUPFAM" id="SSF46785">
    <property type="entry name" value="Winged helix' DNA-binding domain"/>
    <property type="match status" value="1"/>
</dbReference>
<feature type="chain" id="PRO_0000151014" description="ORC1-type DNA replication protein">
    <location>
        <begin position="1"/>
        <end position="415"/>
    </location>
</feature>
<feature type="binding site" evidence="1">
    <location>
        <begin position="69"/>
        <end position="73"/>
    </location>
    <ligand>
        <name>ATP</name>
        <dbReference type="ChEBI" id="CHEBI:30616"/>
    </ligand>
</feature>
<feature type="binding site" evidence="1">
    <location>
        <position position="217"/>
    </location>
    <ligand>
        <name>ATP</name>
        <dbReference type="ChEBI" id="CHEBI:30616"/>
    </ligand>
</feature>
<feature type="binding site" evidence="1">
    <location>
        <position position="229"/>
    </location>
    <ligand>
        <name>ATP</name>
        <dbReference type="ChEBI" id="CHEBI:30616"/>
    </ligand>
</feature>
<evidence type="ECO:0000255" key="1">
    <source>
        <dbReference type="HAMAP-Rule" id="MF_01407"/>
    </source>
</evidence>
<accession>Q5JET2</accession>
<proteinExistence type="inferred from homology"/>
<organism>
    <name type="scientific">Thermococcus kodakarensis (strain ATCC BAA-918 / JCM 12380 / KOD1)</name>
    <name type="common">Pyrococcus kodakaraensis (strain KOD1)</name>
    <dbReference type="NCBI Taxonomy" id="69014"/>
    <lineage>
        <taxon>Archaea</taxon>
        <taxon>Methanobacteriati</taxon>
        <taxon>Methanobacteriota</taxon>
        <taxon>Thermococci</taxon>
        <taxon>Thermococcales</taxon>
        <taxon>Thermococcaceae</taxon>
        <taxon>Thermococcus</taxon>
    </lineage>
</organism>
<name>CDC6_THEKO</name>
<sequence>MDDDYLSSIFEKYLHARKIFKNKEVLRHSYTPKELPHRHKQIDDLAHILVPVLRGETPSNVFVYGKTGTGKTVTVKFVTEELKKISQKYNIPVEVIYINCEIIDTHYRVLARIVNHFKEESGIEVPLVGWPTDEVYAKLKEVIDAKERFVIIVLDEIDKLIKKSGDDILYSLTRINSELSKAKVSIIGISNDLKFKEYLDARVLSSLSEEEVVFPPYDANQLRDILMQRAKEAFYEGVLDDAVVPLCAALAAREHGDARRALDLLRVAGEIAEREGASKVTERHVWKAQEKIEQDTMEEVIKTLPLHSKVLLYAIVMLDENGELPANTGEVYSIYKMLCDSLDVEPLTQRRVSDLINELDMLGIINAKVVSKGRYGRTKEIRLNVTPYMVKNIYRHDEQVRPLLTLSLSRQRRLF</sequence>